<reference key="1">
    <citation type="submission" date="2005-10" db="EMBL/GenBank/DDBJ databases">
        <title>Complete sequence of chromosome 2 of Burkholderia sp. 383.</title>
        <authorList>
            <consortium name="US DOE Joint Genome Institute"/>
            <person name="Copeland A."/>
            <person name="Lucas S."/>
            <person name="Lapidus A."/>
            <person name="Barry K."/>
            <person name="Detter J.C."/>
            <person name="Glavina T."/>
            <person name="Hammon N."/>
            <person name="Israni S."/>
            <person name="Pitluck S."/>
            <person name="Chain P."/>
            <person name="Malfatti S."/>
            <person name="Shin M."/>
            <person name="Vergez L."/>
            <person name="Schmutz J."/>
            <person name="Larimer F."/>
            <person name="Land M."/>
            <person name="Kyrpides N."/>
            <person name="Lykidis A."/>
            <person name="Richardson P."/>
        </authorList>
    </citation>
    <scope>NUCLEOTIDE SEQUENCE [LARGE SCALE GENOMIC DNA]</scope>
    <source>
        <strain>ATCC 17760 / DSM 23089 / LMG 22485 / NCIMB 9086 / R18194 / 383</strain>
    </source>
</reference>
<name>TDH_BURL3</name>
<comment type="function">
    <text evidence="1">Catalyzes the NAD(+)-dependent oxidation of L-threonine to 2-amino-3-ketobutyrate.</text>
</comment>
<comment type="catalytic activity">
    <reaction evidence="1">
        <text>L-threonine + NAD(+) = (2S)-2-amino-3-oxobutanoate + NADH + H(+)</text>
        <dbReference type="Rhea" id="RHEA:13161"/>
        <dbReference type="ChEBI" id="CHEBI:15378"/>
        <dbReference type="ChEBI" id="CHEBI:57540"/>
        <dbReference type="ChEBI" id="CHEBI:57926"/>
        <dbReference type="ChEBI" id="CHEBI:57945"/>
        <dbReference type="ChEBI" id="CHEBI:78948"/>
        <dbReference type="EC" id="1.1.1.103"/>
    </reaction>
</comment>
<comment type="cofactor">
    <cofactor evidence="1">
        <name>Zn(2+)</name>
        <dbReference type="ChEBI" id="CHEBI:29105"/>
    </cofactor>
    <text evidence="1">Binds 2 Zn(2+) ions per subunit.</text>
</comment>
<comment type="pathway">
    <text evidence="1">Amino-acid degradation; L-threonine degradation via oxydo-reductase pathway; glycine from L-threonine: step 1/2.</text>
</comment>
<comment type="subunit">
    <text evidence="1">Homotetramer.</text>
</comment>
<comment type="subcellular location">
    <subcellularLocation>
        <location evidence="1">Cytoplasm</location>
    </subcellularLocation>
</comment>
<comment type="similarity">
    <text evidence="1">Belongs to the zinc-containing alcohol dehydrogenase family.</text>
</comment>
<feature type="chain" id="PRO_1000051626" description="L-threonine 3-dehydrogenase">
    <location>
        <begin position="1"/>
        <end position="342"/>
    </location>
</feature>
<feature type="active site" description="Charge relay system" evidence="1">
    <location>
        <position position="40"/>
    </location>
</feature>
<feature type="active site" description="Charge relay system" evidence="1">
    <location>
        <position position="43"/>
    </location>
</feature>
<feature type="binding site" evidence="1">
    <location>
        <position position="38"/>
    </location>
    <ligand>
        <name>Zn(2+)</name>
        <dbReference type="ChEBI" id="CHEBI:29105"/>
        <label>1</label>
        <note>catalytic</note>
    </ligand>
</feature>
<feature type="binding site" evidence="1">
    <location>
        <position position="63"/>
    </location>
    <ligand>
        <name>Zn(2+)</name>
        <dbReference type="ChEBI" id="CHEBI:29105"/>
        <label>1</label>
        <note>catalytic</note>
    </ligand>
</feature>
<feature type="binding site" evidence="1">
    <location>
        <position position="64"/>
    </location>
    <ligand>
        <name>Zn(2+)</name>
        <dbReference type="ChEBI" id="CHEBI:29105"/>
        <label>1</label>
        <note>catalytic</note>
    </ligand>
</feature>
<feature type="binding site" evidence="1">
    <location>
        <position position="93"/>
    </location>
    <ligand>
        <name>Zn(2+)</name>
        <dbReference type="ChEBI" id="CHEBI:29105"/>
        <label>2</label>
    </ligand>
</feature>
<feature type="binding site" evidence="1">
    <location>
        <position position="96"/>
    </location>
    <ligand>
        <name>Zn(2+)</name>
        <dbReference type="ChEBI" id="CHEBI:29105"/>
        <label>2</label>
    </ligand>
</feature>
<feature type="binding site" evidence="1">
    <location>
        <position position="99"/>
    </location>
    <ligand>
        <name>Zn(2+)</name>
        <dbReference type="ChEBI" id="CHEBI:29105"/>
        <label>2</label>
    </ligand>
</feature>
<feature type="binding site" evidence="1">
    <location>
        <position position="107"/>
    </location>
    <ligand>
        <name>Zn(2+)</name>
        <dbReference type="ChEBI" id="CHEBI:29105"/>
        <label>2</label>
    </ligand>
</feature>
<feature type="binding site" evidence="1">
    <location>
        <position position="175"/>
    </location>
    <ligand>
        <name>NAD(+)</name>
        <dbReference type="ChEBI" id="CHEBI:57540"/>
    </ligand>
</feature>
<feature type="binding site" evidence="1">
    <location>
        <position position="195"/>
    </location>
    <ligand>
        <name>NAD(+)</name>
        <dbReference type="ChEBI" id="CHEBI:57540"/>
    </ligand>
</feature>
<feature type="binding site" evidence="1">
    <location>
        <position position="200"/>
    </location>
    <ligand>
        <name>NAD(+)</name>
        <dbReference type="ChEBI" id="CHEBI:57540"/>
    </ligand>
</feature>
<feature type="binding site" evidence="1">
    <location>
        <begin position="262"/>
        <end position="264"/>
    </location>
    <ligand>
        <name>NAD(+)</name>
        <dbReference type="ChEBI" id="CHEBI:57540"/>
    </ligand>
</feature>
<feature type="binding site" evidence="1">
    <location>
        <begin position="286"/>
        <end position="287"/>
    </location>
    <ligand>
        <name>NAD(+)</name>
        <dbReference type="ChEBI" id="CHEBI:57540"/>
    </ligand>
</feature>
<feature type="site" description="Important for catalytic activity for the proton relay mechanism but does not participate directly in the coordination of zinc atom" evidence="1">
    <location>
        <position position="148"/>
    </location>
</feature>
<proteinExistence type="inferred from homology"/>
<gene>
    <name evidence="1" type="primary">tdh</name>
    <name type="ordered locus">Bcep18194_B3178</name>
</gene>
<organism>
    <name type="scientific">Burkholderia lata (strain ATCC 17760 / DSM 23089 / LMG 22485 / NCIMB 9086 / R18194 / 383)</name>
    <dbReference type="NCBI Taxonomy" id="482957"/>
    <lineage>
        <taxon>Bacteria</taxon>
        <taxon>Pseudomonadati</taxon>
        <taxon>Pseudomonadota</taxon>
        <taxon>Betaproteobacteria</taxon>
        <taxon>Burkholderiales</taxon>
        <taxon>Burkholderiaceae</taxon>
        <taxon>Burkholderia</taxon>
        <taxon>Burkholderia cepacia complex</taxon>
    </lineage>
</organism>
<keyword id="KW-0963">Cytoplasm</keyword>
<keyword id="KW-0479">Metal-binding</keyword>
<keyword id="KW-0520">NAD</keyword>
<keyword id="KW-0560">Oxidoreductase</keyword>
<keyword id="KW-0862">Zinc</keyword>
<accession>Q38ZS8</accession>
<protein>
    <recommendedName>
        <fullName evidence="1">L-threonine 3-dehydrogenase</fullName>
        <shortName evidence="1">TDH</shortName>
        <ecNumber evidence="1">1.1.1.103</ecNumber>
    </recommendedName>
</protein>
<dbReference type="EC" id="1.1.1.103" evidence="1"/>
<dbReference type="EMBL" id="CP000152">
    <property type="protein sequence ID" value="ABB13288.1"/>
    <property type="molecule type" value="Genomic_DNA"/>
</dbReference>
<dbReference type="RefSeq" id="WP_011356765.1">
    <property type="nucleotide sequence ID" value="NZ_WNDV01000051.1"/>
</dbReference>
<dbReference type="SMR" id="Q38ZS8"/>
<dbReference type="GeneID" id="93188759"/>
<dbReference type="KEGG" id="bur:Bcep18194_B3178"/>
<dbReference type="HOGENOM" id="CLU_026673_11_0_4"/>
<dbReference type="UniPathway" id="UPA00046">
    <property type="reaction ID" value="UER00505"/>
</dbReference>
<dbReference type="Proteomes" id="UP000002705">
    <property type="component" value="Chromosome 2"/>
</dbReference>
<dbReference type="GO" id="GO:0005737">
    <property type="term" value="C:cytoplasm"/>
    <property type="evidence" value="ECO:0007669"/>
    <property type="project" value="UniProtKB-SubCell"/>
</dbReference>
<dbReference type="GO" id="GO:0008743">
    <property type="term" value="F:L-threonine 3-dehydrogenase activity"/>
    <property type="evidence" value="ECO:0007669"/>
    <property type="project" value="UniProtKB-UniRule"/>
</dbReference>
<dbReference type="GO" id="GO:0008270">
    <property type="term" value="F:zinc ion binding"/>
    <property type="evidence" value="ECO:0007669"/>
    <property type="project" value="UniProtKB-UniRule"/>
</dbReference>
<dbReference type="GO" id="GO:0019518">
    <property type="term" value="P:L-threonine catabolic process to glycine"/>
    <property type="evidence" value="ECO:0007669"/>
    <property type="project" value="UniProtKB-UniPathway"/>
</dbReference>
<dbReference type="Gene3D" id="3.90.180.10">
    <property type="entry name" value="Medium-chain alcohol dehydrogenases, catalytic domain"/>
    <property type="match status" value="1"/>
</dbReference>
<dbReference type="Gene3D" id="3.40.50.720">
    <property type="entry name" value="NAD(P)-binding Rossmann-like Domain"/>
    <property type="match status" value="1"/>
</dbReference>
<dbReference type="HAMAP" id="MF_00627">
    <property type="entry name" value="Thr_dehydrog"/>
    <property type="match status" value="1"/>
</dbReference>
<dbReference type="InterPro" id="IPR013149">
    <property type="entry name" value="ADH-like_C"/>
</dbReference>
<dbReference type="InterPro" id="IPR013154">
    <property type="entry name" value="ADH-like_N"/>
</dbReference>
<dbReference type="InterPro" id="IPR002328">
    <property type="entry name" value="ADH_Zn_CS"/>
</dbReference>
<dbReference type="InterPro" id="IPR011032">
    <property type="entry name" value="GroES-like_sf"/>
</dbReference>
<dbReference type="InterPro" id="IPR004627">
    <property type="entry name" value="L-Threonine_3-DHase"/>
</dbReference>
<dbReference type="InterPro" id="IPR036291">
    <property type="entry name" value="NAD(P)-bd_dom_sf"/>
</dbReference>
<dbReference type="InterPro" id="IPR020843">
    <property type="entry name" value="PKS_ER"/>
</dbReference>
<dbReference type="InterPro" id="IPR050129">
    <property type="entry name" value="Zn_alcohol_dh"/>
</dbReference>
<dbReference type="NCBIfam" id="NF003808">
    <property type="entry name" value="PRK05396.1"/>
    <property type="match status" value="1"/>
</dbReference>
<dbReference type="NCBIfam" id="TIGR00692">
    <property type="entry name" value="tdh"/>
    <property type="match status" value="1"/>
</dbReference>
<dbReference type="PANTHER" id="PTHR43401">
    <property type="entry name" value="L-THREONINE 3-DEHYDROGENASE"/>
    <property type="match status" value="1"/>
</dbReference>
<dbReference type="PANTHER" id="PTHR43401:SF2">
    <property type="entry name" value="L-THREONINE 3-DEHYDROGENASE"/>
    <property type="match status" value="1"/>
</dbReference>
<dbReference type="Pfam" id="PF08240">
    <property type="entry name" value="ADH_N"/>
    <property type="match status" value="1"/>
</dbReference>
<dbReference type="Pfam" id="PF00107">
    <property type="entry name" value="ADH_zinc_N"/>
    <property type="match status" value="1"/>
</dbReference>
<dbReference type="SMART" id="SM00829">
    <property type="entry name" value="PKS_ER"/>
    <property type="match status" value="1"/>
</dbReference>
<dbReference type="SUPFAM" id="SSF50129">
    <property type="entry name" value="GroES-like"/>
    <property type="match status" value="1"/>
</dbReference>
<dbReference type="SUPFAM" id="SSF51735">
    <property type="entry name" value="NAD(P)-binding Rossmann-fold domains"/>
    <property type="match status" value="1"/>
</dbReference>
<dbReference type="PROSITE" id="PS00059">
    <property type="entry name" value="ADH_ZINC"/>
    <property type="match status" value="1"/>
</dbReference>
<evidence type="ECO:0000255" key="1">
    <source>
        <dbReference type="HAMAP-Rule" id="MF_00627"/>
    </source>
</evidence>
<sequence length="342" mass="37392">MKALAKLERGPGLTLTRVKRPEVGHNDVLIKIRRTAICGTDIHIWKWDDWAQKTIPVPMHVGHEYVGEIVEMGQEVRGFAIGDRVSGEGHITCGFCRNCRAGRRHLCRNTVGVGVNREGAFAEYLAIPAFNAFKIPPEISDDLASIFDPFGNATHTALSFNLVGEDVLITGAGPIGIMAVAIAKHVGARNVVITDINDYRLELARKMGATRAVNVARESLRDVMSDLHMTEGFDVGLEMSGVPSAFTSMLEAMNHGGKVALLGIPPAQTAIDWNQVIFKGLEIKGIYGREMFETWYKMVAMLQSGLDLSPIITHRFAADDYEKGFAAMLSGESGKVILDWTA</sequence>